<gene>
    <name type="primary">kcnab3</name>
    <name type="synonym">kvb-B</name>
    <name type="synonym">kvb4</name>
</gene>
<sequence>MQVSFACTEQTLRSRTSEDRLCPSRPSGGQNGVSMAQTKQRTPPMGAKNHNQVLPLLSHILRESTVKSTGMKYRNLGKSGLRVSCLGLGTWVTFGSQISDEVAENLMTVAYEHGVNLFDTAEVYAAGRAERTLGKILKKKEWRRSSYVVTTKIYWGGQAETERGLSRKHIIEGLRGSLERLQLDYVDIVFANRMDPNSPMEEIVRAMTFVINQGMAMYWGTSRWSAMEIMEAYSVARQFNLIPPVCEQAEYHLFQREKVETQLPELYHKIGVGSMTWSPLACGLITGKYTDTVPEKSRASFKGYHWLKEKAISQEGKKQHSKVKELHPIADRLNCTVTQLAIAWCLRSEGVSSVLLGVSNIEQLLENLGAIQVLPHLTPQLVTEIDQILGNKPNLKKDSRA</sequence>
<evidence type="ECO:0000250" key="1">
    <source>
        <dbReference type="UniProtKB" id="P62483"/>
    </source>
</evidence>
<evidence type="ECO:0000250" key="2">
    <source>
        <dbReference type="UniProtKB" id="P63144"/>
    </source>
</evidence>
<evidence type="ECO:0000250" key="3">
    <source>
        <dbReference type="UniProtKB" id="Q14722"/>
    </source>
</evidence>
<evidence type="ECO:0000256" key="4">
    <source>
        <dbReference type="SAM" id="MobiDB-lite"/>
    </source>
</evidence>
<evidence type="ECO:0000269" key="5">
    <source>
    </source>
</evidence>
<evidence type="ECO:0000305" key="6"/>
<keyword id="KW-0963">Cytoplasm</keyword>
<keyword id="KW-0407">Ion channel</keyword>
<keyword id="KW-0406">Ion transport</keyword>
<keyword id="KW-0521">NADP</keyword>
<keyword id="KW-0560">Oxidoreductase</keyword>
<keyword id="KW-0630">Potassium</keyword>
<keyword id="KW-0633">Potassium transport</keyword>
<keyword id="KW-1185">Reference proteome</keyword>
<keyword id="KW-0813">Transport</keyword>
<keyword id="KW-0851">Voltage-gated channel</keyword>
<name>KCAB3_XENLA</name>
<dbReference type="EC" id="1.1.1.-" evidence="1"/>
<dbReference type="EMBL" id="AF172145">
    <property type="protein sequence ID" value="AAD56313.1"/>
    <property type="molecule type" value="mRNA"/>
</dbReference>
<dbReference type="EMBL" id="BC072361">
    <property type="protein sequence ID" value="AAH72361.1"/>
    <property type="molecule type" value="mRNA"/>
</dbReference>
<dbReference type="SMR" id="Q9PTM4"/>
<dbReference type="GeneID" id="373751"/>
<dbReference type="KEGG" id="xla:373751"/>
<dbReference type="AGR" id="Xenbase:XB-GENE-996888"/>
<dbReference type="CTD" id="373751"/>
<dbReference type="Xenbase" id="XB-GENE-996888">
    <property type="gene designation" value="kcnab3.L"/>
</dbReference>
<dbReference type="OrthoDB" id="1720422at2759"/>
<dbReference type="Proteomes" id="UP000186698">
    <property type="component" value="Chromosome 3L"/>
</dbReference>
<dbReference type="Bgee" id="373751">
    <property type="expression patterns" value="Expressed in brain and 7 other cell types or tissues"/>
</dbReference>
<dbReference type="GO" id="GO:0005737">
    <property type="term" value="C:cytoplasm"/>
    <property type="evidence" value="ECO:0007669"/>
    <property type="project" value="UniProtKB-SubCell"/>
</dbReference>
<dbReference type="GO" id="GO:0008076">
    <property type="term" value="C:voltage-gated potassium channel complex"/>
    <property type="evidence" value="ECO:0000318"/>
    <property type="project" value="GO_Central"/>
</dbReference>
<dbReference type="GO" id="GO:0004033">
    <property type="term" value="F:aldo-keto reductase (NADPH) activity"/>
    <property type="evidence" value="ECO:0000318"/>
    <property type="project" value="GO_Central"/>
</dbReference>
<dbReference type="GO" id="GO:0015459">
    <property type="term" value="F:potassium channel regulator activity"/>
    <property type="evidence" value="ECO:0000318"/>
    <property type="project" value="GO_Central"/>
</dbReference>
<dbReference type="GO" id="GO:0044325">
    <property type="term" value="F:transmembrane transporter binding"/>
    <property type="evidence" value="ECO:0000318"/>
    <property type="project" value="GO_Central"/>
</dbReference>
<dbReference type="GO" id="GO:0005249">
    <property type="term" value="F:voltage-gated potassium channel activity"/>
    <property type="evidence" value="ECO:0007669"/>
    <property type="project" value="InterPro"/>
</dbReference>
<dbReference type="GO" id="GO:1901379">
    <property type="term" value="P:regulation of potassium ion transmembrane transport"/>
    <property type="evidence" value="ECO:0000318"/>
    <property type="project" value="GO_Central"/>
</dbReference>
<dbReference type="CDD" id="cd19160">
    <property type="entry name" value="AKR_KCAB3B_AKR6A9-like"/>
    <property type="match status" value="1"/>
</dbReference>
<dbReference type="FunFam" id="3.20.20.100:FF:000001">
    <property type="entry name" value="voltage-gated potassium channel subunit beta-2 isoform X2"/>
    <property type="match status" value="1"/>
</dbReference>
<dbReference type="Gene3D" id="3.20.20.100">
    <property type="entry name" value="NADP-dependent oxidoreductase domain"/>
    <property type="match status" value="1"/>
</dbReference>
<dbReference type="InterPro" id="IPR005983">
    <property type="entry name" value="K_chnl_volt-dep_bsu_KCNAB"/>
</dbReference>
<dbReference type="InterPro" id="IPR005399">
    <property type="entry name" value="K_chnl_volt-dep_bsu_KCNAB-rel"/>
</dbReference>
<dbReference type="InterPro" id="IPR005402">
    <property type="entry name" value="K_chnl_volt-dep_bsu_KCNAB3"/>
</dbReference>
<dbReference type="InterPro" id="IPR023210">
    <property type="entry name" value="NADP_OxRdtase_dom"/>
</dbReference>
<dbReference type="InterPro" id="IPR036812">
    <property type="entry name" value="NADP_OxRdtase_dom_sf"/>
</dbReference>
<dbReference type="NCBIfam" id="TIGR01293">
    <property type="entry name" value="Kv_beta"/>
    <property type="match status" value="1"/>
</dbReference>
<dbReference type="PANTHER" id="PTHR43150">
    <property type="entry name" value="HYPERKINETIC, ISOFORM M"/>
    <property type="match status" value="1"/>
</dbReference>
<dbReference type="PANTHER" id="PTHR43150:SF3">
    <property type="entry name" value="VOLTAGE-GATED POTASSIUM CHANNEL SUBUNIT BETA-3"/>
    <property type="match status" value="1"/>
</dbReference>
<dbReference type="Pfam" id="PF00248">
    <property type="entry name" value="Aldo_ket_red"/>
    <property type="match status" value="1"/>
</dbReference>
<dbReference type="PRINTS" id="PR01580">
    <property type="entry name" value="KCNAB3CHANEL"/>
</dbReference>
<dbReference type="PRINTS" id="PR01577">
    <property type="entry name" value="KCNABCHANNEL"/>
</dbReference>
<dbReference type="SUPFAM" id="SSF51430">
    <property type="entry name" value="NAD(P)-linked oxidoreductase"/>
    <property type="match status" value="1"/>
</dbReference>
<proteinExistence type="evidence at transcript level"/>
<protein>
    <recommendedName>
        <fullName>Voltage-gated potassium channel subunit beta-3</fullName>
        <ecNumber evidence="1">1.1.1.-</ecNumber>
    </recommendedName>
    <alternativeName>
        <fullName>K(+) channel subunit beta-3</fullName>
    </alternativeName>
    <alternativeName>
        <fullName>Kv-beta-3</fullName>
    </alternativeName>
</protein>
<reference key="1">
    <citation type="journal article" date="1999" name="J. Neurosci.">
        <title>Xenopus embryonic spinal neurons express potassium channel Kvbeta subunits.</title>
        <authorList>
            <person name="Lazaroff M.A."/>
            <person name="Hofmann A.D."/>
            <person name="Ribera A.B."/>
        </authorList>
    </citation>
    <scope>NUCLEOTIDE SEQUENCE [MRNA]</scope>
    <scope>FUNCTION</scope>
    <scope>DEVELOPMENTAL STAGE</scope>
    <source>
        <tissue>Tadpole head</tissue>
    </source>
</reference>
<reference key="2">
    <citation type="submission" date="2004-06" db="EMBL/GenBank/DDBJ databases">
        <authorList>
            <consortium name="NIH - Xenopus Gene Collection (XGC) project"/>
        </authorList>
    </citation>
    <scope>NUCLEOTIDE SEQUENCE [LARGE SCALE MRNA] OF 2-401</scope>
    <source>
        <tissue>Eye</tissue>
    </source>
</reference>
<comment type="function">
    <text evidence="2 5">Regulatory subunit of the voltage-gated potassium (Kv) channels composed of pore-forming and potassium-conducting alpha subunits and of regulatory beta subunit (PubMed:10594054). The beta-3/KCNAB3 subunit may mediate closure of potassium channels (By similarity). Increases and accelerates inactivation of Kv1.1/KCNA1 and Kv2.2/KCNA2 subunit-containing channels (PubMed:10594054). May display nicotinamide adenine dinucleotide phosphate (NADPH)-dependent aldoketoreductase activity (By similarity). The binding of oxidized and reduced NADP(H) cofactors may be required for the regulation of potassium channel activity (By similarity).</text>
</comment>
<comment type="subunit">
    <text evidence="5">Forms heteromultimeric complex with alpha subunits (PubMed:10594054). Identified in potassium channel complexes containing KCNA1 and KCNA2 (PubMed:10594054).</text>
</comment>
<comment type="subcellular location">
    <subcellularLocation>
        <location evidence="3">Cytoplasm</location>
    </subcellularLocation>
</comment>
<comment type="developmental stage">
    <text evidence="5">Expression first detected in brain and most anterior regions of spinal cord at embryonic stage 24 (26 hours). By stage 29 (35 hours) expression is also detected in posterior regions of spinal cord.</text>
</comment>
<comment type="similarity">
    <text evidence="6">Belongs to the shaker potassium channel beta subunit family.</text>
</comment>
<feature type="chain" id="PRO_0000148753" description="Voltage-gated potassium channel subunit beta-3">
    <location>
        <begin position="1"/>
        <end position="401"/>
    </location>
</feature>
<feature type="region of interest" description="Disordered" evidence="4">
    <location>
        <begin position="1"/>
        <end position="49"/>
    </location>
</feature>
<feature type="compositionally biased region" description="Polar residues" evidence="4">
    <location>
        <begin position="1"/>
        <end position="14"/>
    </location>
</feature>
<feature type="compositionally biased region" description="Polar residues" evidence="4">
    <location>
        <begin position="32"/>
        <end position="41"/>
    </location>
</feature>
<feature type="active site" description="Proton donor/acceptor" evidence="1">
    <location>
        <position position="124"/>
    </location>
</feature>
<feature type="binding site" evidence="1">
    <location>
        <position position="90"/>
    </location>
    <ligand>
        <name>NADP(+)</name>
        <dbReference type="ChEBI" id="CHEBI:58349"/>
    </ligand>
</feature>
<feature type="binding site" evidence="1">
    <location>
        <position position="91"/>
    </location>
    <ligand>
        <name>NADP(+)</name>
        <dbReference type="ChEBI" id="CHEBI:58349"/>
    </ligand>
</feature>
<feature type="binding site" evidence="1">
    <location>
        <position position="97"/>
    </location>
    <ligand>
        <name>NADP(+)</name>
        <dbReference type="ChEBI" id="CHEBI:58349"/>
    </ligand>
</feature>
<feature type="binding site" evidence="1">
    <location>
        <position position="119"/>
    </location>
    <ligand>
        <name>NADP(+)</name>
        <dbReference type="ChEBI" id="CHEBI:58349"/>
    </ligand>
</feature>
<feature type="binding site" evidence="1">
    <location>
        <position position="192"/>
    </location>
    <ligand>
        <name>NADP(+)</name>
        <dbReference type="ChEBI" id="CHEBI:58349"/>
    </ligand>
</feature>
<feature type="binding site" evidence="1">
    <location>
        <position position="222"/>
    </location>
    <ligand>
        <name>NADP(+)</name>
        <dbReference type="ChEBI" id="CHEBI:58349"/>
    </ligand>
</feature>
<feature type="binding site" evidence="1">
    <location>
        <position position="223"/>
    </location>
    <ligand>
        <name>NADP(+)</name>
        <dbReference type="ChEBI" id="CHEBI:58349"/>
    </ligand>
</feature>
<feature type="binding site" evidence="1">
    <location>
        <position position="248"/>
    </location>
    <ligand>
        <name>NADP(+)</name>
        <dbReference type="ChEBI" id="CHEBI:58349"/>
    </ligand>
</feature>
<feature type="binding site" evidence="1">
    <location>
        <position position="277"/>
    </location>
    <ligand>
        <name>NADP(+)</name>
        <dbReference type="ChEBI" id="CHEBI:58349"/>
    </ligand>
</feature>
<feature type="binding site" evidence="1">
    <location>
        <position position="278"/>
    </location>
    <ligand>
        <name>NADP(+)</name>
        <dbReference type="ChEBI" id="CHEBI:58349"/>
    </ligand>
</feature>
<feature type="binding site" evidence="1">
    <location>
        <position position="279"/>
    </location>
    <ligand>
        <name>NADP(+)</name>
        <dbReference type="ChEBI" id="CHEBI:58349"/>
    </ligand>
</feature>
<feature type="binding site" evidence="1">
    <location>
        <position position="280"/>
    </location>
    <ligand>
        <name>NADP(+)</name>
        <dbReference type="ChEBI" id="CHEBI:58349"/>
    </ligand>
</feature>
<feature type="binding site" evidence="1">
    <location>
        <position position="281"/>
    </location>
    <ligand>
        <name>NADP(+)</name>
        <dbReference type="ChEBI" id="CHEBI:58349"/>
    </ligand>
</feature>
<feature type="binding site" evidence="1">
    <location>
        <position position="282"/>
    </location>
    <ligand>
        <name>NADP(+)</name>
        <dbReference type="ChEBI" id="CHEBI:58349"/>
    </ligand>
</feature>
<feature type="binding site" evidence="1">
    <location>
        <position position="288"/>
    </location>
    <ligand>
        <name>NADP(+)</name>
        <dbReference type="ChEBI" id="CHEBI:58349"/>
    </ligand>
</feature>
<feature type="binding site" evidence="1">
    <location>
        <position position="298"/>
    </location>
    <ligand>
        <name>NADP(+)</name>
        <dbReference type="ChEBI" id="CHEBI:58349"/>
    </ligand>
</feature>
<feature type="binding site" evidence="1">
    <location>
        <position position="357"/>
    </location>
    <ligand>
        <name>NADP(+)</name>
        <dbReference type="ChEBI" id="CHEBI:58349"/>
    </ligand>
</feature>
<feature type="binding site" evidence="1">
    <location>
        <position position="359"/>
    </location>
    <ligand>
        <name>NADP(+)</name>
        <dbReference type="ChEBI" id="CHEBI:58349"/>
    </ligand>
</feature>
<feature type="binding site" evidence="1">
    <location>
        <position position="363"/>
    </location>
    <ligand>
        <name>NADP(+)</name>
        <dbReference type="ChEBI" id="CHEBI:58349"/>
    </ligand>
</feature>
<feature type="binding site" evidence="1">
    <location>
        <position position="366"/>
    </location>
    <ligand>
        <name>NADP(+)</name>
        <dbReference type="ChEBI" id="CHEBI:58349"/>
    </ligand>
</feature>
<feature type="binding site" evidence="1">
    <location>
        <position position="367"/>
    </location>
    <ligand>
        <name>NADP(+)</name>
        <dbReference type="ChEBI" id="CHEBI:58349"/>
    </ligand>
</feature>
<organism>
    <name type="scientific">Xenopus laevis</name>
    <name type="common">African clawed frog</name>
    <dbReference type="NCBI Taxonomy" id="8355"/>
    <lineage>
        <taxon>Eukaryota</taxon>
        <taxon>Metazoa</taxon>
        <taxon>Chordata</taxon>
        <taxon>Craniata</taxon>
        <taxon>Vertebrata</taxon>
        <taxon>Euteleostomi</taxon>
        <taxon>Amphibia</taxon>
        <taxon>Batrachia</taxon>
        <taxon>Anura</taxon>
        <taxon>Pipoidea</taxon>
        <taxon>Pipidae</taxon>
        <taxon>Xenopodinae</taxon>
        <taxon>Xenopus</taxon>
        <taxon>Xenopus</taxon>
    </lineage>
</organism>
<accession>Q9PTM4</accession>
<accession>Q6INC2</accession>